<comment type="function">
    <text evidence="1">RNaseP catalyzes the removal of the 5'-leader sequence from pre-tRNA to produce the mature 5'-terminus. It can also cleave other RNA substrates such as 4.5S RNA. The protein component plays an auxiliary but essential role in vivo by binding to the 5'-leader sequence and broadening the substrate specificity of the ribozyme.</text>
</comment>
<comment type="catalytic activity">
    <reaction evidence="1">
        <text>Endonucleolytic cleavage of RNA, removing 5'-extranucleotides from tRNA precursor.</text>
        <dbReference type="EC" id="3.1.26.5"/>
    </reaction>
</comment>
<comment type="subunit">
    <text evidence="1">Consists of a catalytic RNA component (M1 or rnpB) and a protein subunit.</text>
</comment>
<comment type="similarity">
    <text evidence="1">Belongs to the RnpA family.</text>
</comment>
<reference key="1">
    <citation type="submission" date="2007-04" db="EMBL/GenBank/DDBJ databases">
        <title>Complete sequence of Pseudomonas mendocina ymp.</title>
        <authorList>
            <consortium name="US DOE Joint Genome Institute"/>
            <person name="Copeland A."/>
            <person name="Lucas S."/>
            <person name="Lapidus A."/>
            <person name="Barry K."/>
            <person name="Glavina del Rio T."/>
            <person name="Dalin E."/>
            <person name="Tice H."/>
            <person name="Pitluck S."/>
            <person name="Kiss H."/>
            <person name="Brettin T."/>
            <person name="Detter J.C."/>
            <person name="Bruce D."/>
            <person name="Han C."/>
            <person name="Schmutz J."/>
            <person name="Larimer F."/>
            <person name="Land M."/>
            <person name="Hauser L."/>
            <person name="Kyrpides N."/>
            <person name="Mikhailova N."/>
            <person name="Hersman L."/>
            <person name="Dubois J."/>
            <person name="Maurice P."/>
            <person name="Richardson P."/>
        </authorList>
    </citation>
    <scope>NUCLEOTIDE SEQUENCE [LARGE SCALE GENOMIC DNA]</scope>
    <source>
        <strain>ymp</strain>
    </source>
</reference>
<accession>A4Y1A2</accession>
<evidence type="ECO:0000255" key="1">
    <source>
        <dbReference type="HAMAP-Rule" id="MF_00227"/>
    </source>
</evidence>
<gene>
    <name evidence="1" type="primary">rnpA</name>
    <name type="ordered locus">Pmen_4622</name>
</gene>
<protein>
    <recommendedName>
        <fullName evidence="1">Ribonuclease P protein component</fullName>
        <shortName evidence="1">RNase P protein</shortName>
        <shortName evidence="1">RNaseP protein</shortName>
        <ecNumber evidence="1">3.1.26.5</ecNumber>
    </recommendedName>
    <alternativeName>
        <fullName evidence="1">Protein C5</fullName>
    </alternativeName>
</protein>
<keyword id="KW-0255">Endonuclease</keyword>
<keyword id="KW-0378">Hydrolase</keyword>
<keyword id="KW-0540">Nuclease</keyword>
<keyword id="KW-0694">RNA-binding</keyword>
<keyword id="KW-0819">tRNA processing</keyword>
<proteinExistence type="inferred from homology"/>
<organism>
    <name type="scientific">Ectopseudomonas mendocina (strain ymp)</name>
    <name type="common">Pseudomonas mendocina</name>
    <dbReference type="NCBI Taxonomy" id="399739"/>
    <lineage>
        <taxon>Bacteria</taxon>
        <taxon>Pseudomonadati</taxon>
        <taxon>Pseudomonadota</taxon>
        <taxon>Gammaproteobacteria</taxon>
        <taxon>Pseudomonadales</taxon>
        <taxon>Pseudomonadaceae</taxon>
        <taxon>Ectopseudomonas</taxon>
    </lineage>
</organism>
<dbReference type="EC" id="3.1.26.5" evidence="1"/>
<dbReference type="EMBL" id="CP000680">
    <property type="protein sequence ID" value="ABP87368.1"/>
    <property type="molecule type" value="Genomic_DNA"/>
</dbReference>
<dbReference type="SMR" id="A4Y1A2"/>
<dbReference type="STRING" id="399739.Pmen_4622"/>
<dbReference type="KEGG" id="pmy:Pmen_4622"/>
<dbReference type="PATRIC" id="fig|399739.8.peg.4687"/>
<dbReference type="eggNOG" id="COG0594">
    <property type="taxonomic scope" value="Bacteria"/>
</dbReference>
<dbReference type="HOGENOM" id="CLU_117179_11_0_6"/>
<dbReference type="GO" id="GO:0030677">
    <property type="term" value="C:ribonuclease P complex"/>
    <property type="evidence" value="ECO:0007669"/>
    <property type="project" value="TreeGrafter"/>
</dbReference>
<dbReference type="GO" id="GO:0042781">
    <property type="term" value="F:3'-tRNA processing endoribonuclease activity"/>
    <property type="evidence" value="ECO:0007669"/>
    <property type="project" value="TreeGrafter"/>
</dbReference>
<dbReference type="GO" id="GO:0004526">
    <property type="term" value="F:ribonuclease P activity"/>
    <property type="evidence" value="ECO:0007669"/>
    <property type="project" value="UniProtKB-UniRule"/>
</dbReference>
<dbReference type="GO" id="GO:0000049">
    <property type="term" value="F:tRNA binding"/>
    <property type="evidence" value="ECO:0007669"/>
    <property type="project" value="UniProtKB-UniRule"/>
</dbReference>
<dbReference type="GO" id="GO:0001682">
    <property type="term" value="P:tRNA 5'-leader removal"/>
    <property type="evidence" value="ECO:0007669"/>
    <property type="project" value="UniProtKB-UniRule"/>
</dbReference>
<dbReference type="Gene3D" id="3.30.230.10">
    <property type="match status" value="1"/>
</dbReference>
<dbReference type="HAMAP" id="MF_00227">
    <property type="entry name" value="RNase_P"/>
    <property type="match status" value="1"/>
</dbReference>
<dbReference type="InterPro" id="IPR020568">
    <property type="entry name" value="Ribosomal_Su5_D2-typ_SF"/>
</dbReference>
<dbReference type="InterPro" id="IPR014721">
    <property type="entry name" value="Ribsml_uS5_D2-typ_fold_subgr"/>
</dbReference>
<dbReference type="InterPro" id="IPR000100">
    <property type="entry name" value="RNase_P"/>
</dbReference>
<dbReference type="InterPro" id="IPR020539">
    <property type="entry name" value="RNase_P_CS"/>
</dbReference>
<dbReference type="NCBIfam" id="TIGR00188">
    <property type="entry name" value="rnpA"/>
    <property type="match status" value="1"/>
</dbReference>
<dbReference type="PANTHER" id="PTHR33992">
    <property type="entry name" value="RIBONUCLEASE P PROTEIN COMPONENT"/>
    <property type="match status" value="1"/>
</dbReference>
<dbReference type="PANTHER" id="PTHR33992:SF1">
    <property type="entry name" value="RIBONUCLEASE P PROTEIN COMPONENT"/>
    <property type="match status" value="1"/>
</dbReference>
<dbReference type="Pfam" id="PF00825">
    <property type="entry name" value="Ribonuclease_P"/>
    <property type="match status" value="1"/>
</dbReference>
<dbReference type="SUPFAM" id="SSF54211">
    <property type="entry name" value="Ribosomal protein S5 domain 2-like"/>
    <property type="match status" value="1"/>
</dbReference>
<dbReference type="PROSITE" id="PS00648">
    <property type="entry name" value="RIBONUCLEASE_P"/>
    <property type="match status" value="1"/>
</dbReference>
<feature type="chain" id="PRO_1000194667" description="Ribonuclease P protein component">
    <location>
        <begin position="1"/>
        <end position="134"/>
    </location>
</feature>
<name>RNPA_ECTM1</name>
<sequence>MVSRGFGREKRLLTPRQFKAVFDSPSGKAPGKSVLLLARDNQLDHPRLGLVIGKKSVKLAVERNRIKRQIRESFRLNQDNLVGWDIVVVARKGLGDLENGELAQQFGKLWKRLARSRPSRDADVSPGTSDNPHA</sequence>